<proteinExistence type="inferred from homology"/>
<sequence>MDPCECSKTGTCNCGGSCTCTNCSCTSCKKSCCSCCPAGCSKCASGCVCKGKTCDTSCCQ</sequence>
<keyword id="KW-0479">Metal-binding</keyword>
<keyword id="KW-0480">Metal-thiolate cluster</keyword>
<keyword id="KW-1185">Reference proteome</keyword>
<gene>
    <name type="primary">mta</name>
</gene>
<reference key="1">
    <citation type="submission" date="1996-04" db="EMBL/GenBank/DDBJ databases">
        <title>The use of metallothionein genes for determining the phylogenetic and evolutionary relationship between extant teleosts.</title>
        <authorList>
            <person name="Kille P."/>
            <person name="Olsson P.-E."/>
        </authorList>
    </citation>
    <scope>NUCLEOTIDE SEQUENCE [MRNA]</scope>
    <source>
        <tissue>Liver</tissue>
    </source>
</reference>
<reference key="2">
    <citation type="submission" date="1996-08" db="EMBL/GenBank/DDBJ databases">
        <authorList>
            <person name="Tom M."/>
        </authorList>
    </citation>
    <scope>NUCLEOTIDE SEQUENCE [MRNA]</scope>
    <source>
        <tissue>Liver</tissue>
    </source>
</reference>
<reference key="3">
    <citation type="submission" date="1997-04" db="EMBL/GenBank/DDBJ databases">
        <authorList>
            <person name="Cousinou M."/>
            <person name="Lopez-Barea J."/>
            <person name="Dorado G."/>
        </authorList>
    </citation>
    <scope>NUCLEOTIDE SEQUENCE [MRNA]</scope>
    <source>
        <tissue>Liver</tissue>
    </source>
</reference>
<dbReference type="EMBL" id="X97276">
    <property type="protein sequence ID" value="CAA65931.1"/>
    <property type="molecule type" value="mRNA"/>
</dbReference>
<dbReference type="EMBL" id="U58774">
    <property type="protein sequence ID" value="AAC32738.1"/>
    <property type="molecule type" value="mRNA"/>
</dbReference>
<dbReference type="EMBL" id="U93206">
    <property type="protein sequence ID" value="AAB51590.1"/>
    <property type="molecule type" value="mRNA"/>
</dbReference>
<dbReference type="SMR" id="P52727"/>
<dbReference type="FunCoup" id="P52727">
    <property type="interactions" value="81"/>
</dbReference>
<dbReference type="Ensembl" id="ENSSAUT00010022657.1">
    <property type="protein sequence ID" value="ENSSAUP00010021441.1"/>
    <property type="gene ID" value="ENSSAUG00010009507.1"/>
</dbReference>
<dbReference type="GeneTree" id="ENSGT00950000182967"/>
<dbReference type="InParanoid" id="P52727"/>
<dbReference type="OMA" id="CACTNCK"/>
<dbReference type="Proteomes" id="UP000472265">
    <property type="component" value="Chromosome 8"/>
</dbReference>
<dbReference type="GO" id="GO:0046872">
    <property type="term" value="F:metal ion binding"/>
    <property type="evidence" value="ECO:0007669"/>
    <property type="project" value="UniProtKB-KW"/>
</dbReference>
<dbReference type="GO" id="GO:0001525">
    <property type="term" value="P:angiogenesis"/>
    <property type="evidence" value="ECO:0007669"/>
    <property type="project" value="Ensembl"/>
</dbReference>
<dbReference type="GO" id="GO:0090050">
    <property type="term" value="P:positive regulation of cell migration involved in sprouting angiogenesis"/>
    <property type="evidence" value="ECO:0007669"/>
    <property type="project" value="Ensembl"/>
</dbReference>
<dbReference type="GO" id="GO:0010575">
    <property type="term" value="P:positive regulation of vascular endothelial growth factor production"/>
    <property type="evidence" value="ECO:0007669"/>
    <property type="project" value="Ensembl"/>
</dbReference>
<dbReference type="GO" id="GO:0046686">
    <property type="term" value="P:response to cadmium ion"/>
    <property type="evidence" value="ECO:0007669"/>
    <property type="project" value="Ensembl"/>
</dbReference>
<dbReference type="GO" id="GO:0046688">
    <property type="term" value="P:response to copper ion"/>
    <property type="evidence" value="ECO:0007669"/>
    <property type="project" value="Ensembl"/>
</dbReference>
<dbReference type="GO" id="GO:0051597">
    <property type="term" value="P:response to methylmercury"/>
    <property type="evidence" value="ECO:0007669"/>
    <property type="project" value="Ensembl"/>
</dbReference>
<dbReference type="GO" id="GO:0010043">
    <property type="term" value="P:response to zinc ion"/>
    <property type="evidence" value="ECO:0007669"/>
    <property type="project" value="Ensembl"/>
</dbReference>
<dbReference type="FunFam" id="4.10.10.10:FF:000001">
    <property type="entry name" value="Metallothionein"/>
    <property type="match status" value="1"/>
</dbReference>
<dbReference type="Gene3D" id="4.10.10.10">
    <property type="entry name" value="Metallothionein Isoform II"/>
    <property type="match status" value="1"/>
</dbReference>
<dbReference type="InterPro" id="IPR017854">
    <property type="entry name" value="Metalthion_dom_sf"/>
</dbReference>
<dbReference type="InterPro" id="IPR023587">
    <property type="entry name" value="Metalthion_dom_sf_vert"/>
</dbReference>
<dbReference type="InterPro" id="IPR000006">
    <property type="entry name" value="Metalthion_vert"/>
</dbReference>
<dbReference type="InterPro" id="IPR018064">
    <property type="entry name" value="Metalthion_vert_metal_BS"/>
</dbReference>
<dbReference type="PANTHER" id="PTHR23299">
    <property type="entry name" value="METALLOTHIONEIN"/>
    <property type="match status" value="1"/>
</dbReference>
<dbReference type="PANTHER" id="PTHR23299:SF24">
    <property type="entry name" value="METALLOTHIONEIN-1X"/>
    <property type="match status" value="1"/>
</dbReference>
<dbReference type="Pfam" id="PF00131">
    <property type="entry name" value="Metallothio"/>
    <property type="match status" value="1"/>
</dbReference>
<dbReference type="PRINTS" id="PR00860">
    <property type="entry name" value="MTVERTEBRATE"/>
</dbReference>
<dbReference type="SUPFAM" id="SSF57868">
    <property type="entry name" value="Metallothionein"/>
    <property type="match status" value="1"/>
</dbReference>
<dbReference type="PROSITE" id="PS00203">
    <property type="entry name" value="METALLOTHIONEIN_VRT"/>
    <property type="match status" value="1"/>
</dbReference>
<organism>
    <name type="scientific">Sparus aurata</name>
    <name type="common">Gilthead sea bream</name>
    <dbReference type="NCBI Taxonomy" id="8175"/>
    <lineage>
        <taxon>Eukaryota</taxon>
        <taxon>Metazoa</taxon>
        <taxon>Chordata</taxon>
        <taxon>Craniata</taxon>
        <taxon>Vertebrata</taxon>
        <taxon>Euteleostomi</taxon>
        <taxon>Actinopterygii</taxon>
        <taxon>Neopterygii</taxon>
        <taxon>Teleostei</taxon>
        <taxon>Neoteleostei</taxon>
        <taxon>Acanthomorphata</taxon>
        <taxon>Eupercaria</taxon>
        <taxon>Spariformes</taxon>
        <taxon>Sparidae</taxon>
        <taxon>Sparus</taxon>
    </lineage>
</organism>
<feature type="chain" id="PRO_0000197316" description="Metallothionein A">
    <location>
        <begin position="1"/>
        <end position="60"/>
    </location>
</feature>
<feature type="region of interest" description="Beta">
    <location>
        <begin position="1"/>
        <end position="28"/>
    </location>
</feature>
<feature type="region of interest" description="Alpha">
    <location>
        <begin position="29"/>
        <end position="60"/>
    </location>
</feature>
<feature type="binding site" evidence="2">
    <location>
        <position position="4"/>
    </location>
    <ligand>
        <name>a divalent metal cation</name>
        <dbReference type="ChEBI" id="CHEBI:60240"/>
        <label>1</label>
        <note>in cluster B</note>
    </ligand>
</feature>
<feature type="binding site" evidence="2">
    <location>
        <position position="6"/>
    </location>
    <ligand>
        <name>a divalent metal cation</name>
        <dbReference type="ChEBI" id="CHEBI:60240"/>
        <label>1</label>
        <note>in cluster B</note>
    </ligand>
</feature>
<feature type="binding site" evidence="2">
    <location>
        <position position="6"/>
    </location>
    <ligand>
        <name>a divalent metal cation</name>
        <dbReference type="ChEBI" id="CHEBI:60240"/>
        <label>2</label>
        <note>in cluster B</note>
    </ligand>
</feature>
<feature type="binding site" evidence="2">
    <location>
        <position position="12"/>
    </location>
    <ligand>
        <name>a divalent metal cation</name>
        <dbReference type="ChEBI" id="CHEBI:60240"/>
        <label>2</label>
        <note>in cluster B</note>
    </ligand>
</feature>
<feature type="binding site" evidence="2">
    <location>
        <position position="14"/>
    </location>
    <ligand>
        <name>a divalent metal cation</name>
        <dbReference type="ChEBI" id="CHEBI:60240"/>
        <label>2</label>
        <note>in cluster B</note>
    </ligand>
</feature>
<feature type="binding site" evidence="2">
    <location>
        <position position="14"/>
    </location>
    <ligand>
        <name>a divalent metal cation</name>
        <dbReference type="ChEBI" id="CHEBI:60240"/>
        <label>3</label>
        <note>in cluster B</note>
    </ligand>
</feature>
<feature type="binding site" evidence="2">
    <location>
        <position position="18"/>
    </location>
    <ligand>
        <name>a divalent metal cation</name>
        <dbReference type="ChEBI" id="CHEBI:60240"/>
        <label>3</label>
        <note>in cluster B</note>
    </ligand>
</feature>
<feature type="binding site" evidence="2">
    <location>
        <position position="20"/>
    </location>
    <ligand>
        <name>a divalent metal cation</name>
        <dbReference type="ChEBI" id="CHEBI:60240"/>
        <label>1</label>
        <note>in cluster B</note>
    </ligand>
</feature>
<feature type="binding site" evidence="2">
    <location>
        <position position="23"/>
    </location>
    <ligand>
        <name>a divalent metal cation</name>
        <dbReference type="ChEBI" id="CHEBI:60240"/>
        <label>1</label>
        <note>in cluster B</note>
    </ligand>
</feature>
<feature type="binding site" evidence="2">
    <location>
        <position position="23"/>
    </location>
    <ligand>
        <name>a divalent metal cation</name>
        <dbReference type="ChEBI" id="CHEBI:60240"/>
        <label>3</label>
        <note>in cluster B</note>
    </ligand>
</feature>
<feature type="binding site" evidence="2">
    <location>
        <position position="25"/>
    </location>
    <ligand>
        <name>a divalent metal cation</name>
        <dbReference type="ChEBI" id="CHEBI:60240"/>
        <label>2</label>
        <note>in cluster B</note>
    </ligand>
</feature>
<feature type="binding site" evidence="2">
    <location>
        <position position="28"/>
    </location>
    <ligand>
        <name>a divalent metal cation</name>
        <dbReference type="ChEBI" id="CHEBI:60240"/>
        <label>3</label>
        <note>in cluster B</note>
    </ligand>
</feature>
<feature type="binding site" evidence="2">
    <location>
        <position position="32"/>
    </location>
    <ligand>
        <name>a divalent metal cation</name>
        <dbReference type="ChEBI" id="CHEBI:60240"/>
        <label>4</label>
        <note>in cluster A</note>
    </ligand>
</feature>
<feature type="binding site" evidence="2">
    <location>
        <position position="33"/>
    </location>
    <ligand>
        <name>a divalent metal cation</name>
        <dbReference type="ChEBI" id="CHEBI:60240"/>
        <label>4</label>
        <note>in cluster A</note>
    </ligand>
</feature>
<feature type="binding site" evidence="2">
    <location>
        <position position="33"/>
    </location>
    <ligand>
        <name>a divalent metal cation</name>
        <dbReference type="ChEBI" id="CHEBI:60240"/>
        <label>5</label>
        <note>in cluster A</note>
    </ligand>
</feature>
<feature type="binding site" evidence="2">
    <location>
        <position position="35"/>
    </location>
    <ligand>
        <name>a divalent metal cation</name>
        <dbReference type="ChEBI" id="CHEBI:60240"/>
        <label>5</label>
        <note>in cluster A</note>
    </ligand>
</feature>
<feature type="binding site" evidence="2">
    <location>
        <position position="36"/>
    </location>
    <ligand>
        <name>a divalent metal cation</name>
        <dbReference type="ChEBI" id="CHEBI:60240"/>
        <label>5</label>
        <note>in cluster A</note>
    </ligand>
</feature>
<feature type="binding site" evidence="2">
    <location>
        <position position="36"/>
    </location>
    <ligand>
        <name>a divalent metal cation</name>
        <dbReference type="ChEBI" id="CHEBI:60240"/>
        <label>6</label>
        <note>in cluster A</note>
    </ligand>
</feature>
<feature type="binding site" evidence="2">
    <location>
        <position position="40"/>
    </location>
    <ligand>
        <name>a divalent metal cation</name>
        <dbReference type="ChEBI" id="CHEBI:60240"/>
        <label>6</label>
        <note>in cluster A</note>
    </ligand>
</feature>
<feature type="binding site" evidence="2">
    <location>
        <position position="43"/>
    </location>
    <ligand>
        <name>a divalent metal cation</name>
        <dbReference type="ChEBI" id="CHEBI:60240"/>
        <label>4</label>
        <note>in cluster A</note>
    </ligand>
</feature>
<feature type="binding site" evidence="2">
    <location>
        <position position="43"/>
    </location>
    <ligand>
        <name>a divalent metal cation</name>
        <dbReference type="ChEBI" id="CHEBI:60240"/>
        <label>6</label>
        <note>in cluster A</note>
    </ligand>
</feature>
<feature type="binding site" evidence="2">
    <location>
        <position position="47"/>
    </location>
    <ligand>
        <name>a divalent metal cation</name>
        <dbReference type="ChEBI" id="CHEBI:60240"/>
        <label>4</label>
        <note>in cluster A</note>
    </ligand>
</feature>
<feature type="binding site" evidence="2">
    <location>
        <position position="49"/>
    </location>
    <ligand>
        <name>a divalent metal cation</name>
        <dbReference type="ChEBI" id="CHEBI:60240"/>
        <label>5</label>
        <note>in cluster A</note>
    </ligand>
</feature>
<feature type="binding site" evidence="2">
    <location>
        <position position="49"/>
    </location>
    <ligand>
        <name>a divalent metal cation</name>
        <dbReference type="ChEBI" id="CHEBI:60240"/>
        <label>7</label>
        <note>in cluster A</note>
    </ligand>
</feature>
<feature type="binding site" evidence="3">
    <location>
        <position position="54"/>
    </location>
    <ligand>
        <name>a divalent metal cation</name>
        <dbReference type="ChEBI" id="CHEBI:60240"/>
        <label>7</label>
        <note>in cluster A</note>
    </ligand>
</feature>
<feature type="binding site" evidence="2">
    <location>
        <position position="58"/>
    </location>
    <ligand>
        <name>a divalent metal cation</name>
        <dbReference type="ChEBI" id="CHEBI:60240"/>
        <label>7</label>
        <note>in cluster A</note>
    </ligand>
</feature>
<feature type="binding site" evidence="2">
    <location>
        <position position="59"/>
    </location>
    <ligand>
        <name>a divalent metal cation</name>
        <dbReference type="ChEBI" id="CHEBI:60240"/>
        <label>6</label>
        <note>in cluster A</note>
    </ligand>
</feature>
<feature type="binding site" evidence="2">
    <location>
        <position position="59"/>
    </location>
    <ligand>
        <name>a divalent metal cation</name>
        <dbReference type="ChEBI" id="CHEBI:60240"/>
        <label>7</label>
        <note>in cluster A</note>
    </ligand>
</feature>
<comment type="function">
    <text evidence="1">Metallothioneins have a high content of cysteine residues that bind various heavy metals.</text>
</comment>
<comment type="domain">
    <text>Class I metallothioneins contain 2 metal-binding domains: four divalent ions are chelated within cluster A of the alpha domain and are coordinated via cysteinyl thiolate bridges to 11 cysteine ligands. Cluster B, the corresponding region within the beta domain, can ligate three divalent ions to 9 cysteines.</text>
</comment>
<comment type="similarity">
    <text evidence="4">Belongs to the metallothionein superfamily. Type 1 family.</text>
</comment>
<evidence type="ECO:0000250" key="1"/>
<evidence type="ECO:0000250" key="2">
    <source>
        <dbReference type="UniProtKB" id="P02795"/>
    </source>
</evidence>
<evidence type="ECO:0000250" key="3">
    <source>
        <dbReference type="UniProtKB" id="P62339"/>
    </source>
</evidence>
<evidence type="ECO:0000305" key="4"/>
<accession>P52727</accession>
<name>MTA_SPAAU</name>
<protein>
    <recommendedName>
        <fullName>Metallothionein A</fullName>
        <shortName>MT A</shortName>
    </recommendedName>
</protein>